<organism>
    <name type="scientific">Equine infectious anemia virus (isolate CL22)</name>
    <name type="common">EIAV</name>
    <dbReference type="NCBI Taxonomy" id="31675"/>
    <lineage>
        <taxon>Viruses</taxon>
        <taxon>Riboviria</taxon>
        <taxon>Pararnavirae</taxon>
        <taxon>Artverviricota</taxon>
        <taxon>Revtraviricetes</taxon>
        <taxon>Ortervirales</taxon>
        <taxon>Retroviridae</taxon>
        <taxon>Orthoretrovirinae</taxon>
        <taxon>Lentivirus</taxon>
        <taxon>Equine infectious anemia virus</taxon>
    </lineage>
</organism>
<accession>P69731</accession>
<accession>P03351</accession>
<keyword id="KW-0167">Capsid protein</keyword>
<keyword id="KW-1015">Disulfide bond</keyword>
<keyword id="KW-0945">Host-virus interaction</keyword>
<keyword id="KW-0479">Metal-binding</keyword>
<keyword id="KW-0677">Repeat</keyword>
<keyword id="KW-1198">Viral budding</keyword>
<keyword id="KW-1187">Viral budding via the host ESCRT complexes</keyword>
<keyword id="KW-0468">Viral matrix protein</keyword>
<keyword id="KW-0543">Viral nucleoprotein</keyword>
<keyword id="KW-1188">Viral release from host cell</keyword>
<keyword id="KW-0946">Virion</keyword>
<keyword id="KW-0862">Zinc</keyword>
<keyword id="KW-0863">Zinc-finger</keyword>
<protein>
    <recommendedName>
        <fullName>Gag polyprotein</fullName>
    </recommendedName>
    <component>
        <recommendedName>
            <fullName>Matrix protein p15</fullName>
            <shortName>MA</shortName>
        </recommendedName>
    </component>
    <component>
        <recommendedName>
            <fullName>Capsid protein p26</fullName>
            <shortName>CA</shortName>
        </recommendedName>
    </component>
    <component>
        <recommendedName>
            <fullName>p1</fullName>
        </recommendedName>
    </component>
    <component>
        <recommendedName>
            <fullName>Nucleocapsid protein p11</fullName>
            <shortName>NC</shortName>
        </recommendedName>
    </component>
    <component>
        <recommendedName>
            <fullName>p9</fullName>
        </recommendedName>
    </component>
</protein>
<sequence>MGDPLTWSKALKKLEKVTVQGSQKLTTGNCNWALSLVDLFHDTNFVKEKDWQLRDVIPLLEDVTQTLSGQEREAFERTWWAISAVKMGLQINNVVDGKASFQLLRAKYEKKTANKKQSEPSEEYPIMIDGAGNRNFRPLTPRGYTTWVNTIQTNGLLNEASQNLFGILSVDCTSEEMNAFLDVVPGQAGQKQILLDAIDKIADDWDNRHPLPNAPLVAPPQGPIPMTARFIRGLGVPRERQMEPAFDQFRQTYRQWIIEAMSEGIKVMIGKPKAQNIRQGAKEPYPEFVDRLLSQIKSEGHPQEISKFLTDTLTIQNANEECRNAMRHLRPEDTLEEKMYACRDIGTTKQKMMLLAKALQTGLAGPFKGGALKGGPLKAAQTCYNCGKPGHLSSQCRAPKVCFKCKQPGHFSKQCRSVPKNGKQGAQGRPQKQTFPIQQKSQHNKSVVQETPQTQNLYPDLSEIKKEYNVKEKDQVEDLNLDSLWE</sequence>
<feature type="chain" id="PRO_0000038776" description="Matrix protein p15" evidence="1">
    <location>
        <begin position="1"/>
        <end position="124"/>
    </location>
</feature>
<feature type="chain" id="PRO_0000038777" description="Capsid protein p26" evidence="1">
    <location>
        <begin position="125"/>
        <end position="359"/>
    </location>
</feature>
<feature type="peptide" id="PRO_0000272314" description="p1" evidence="2">
    <location>
        <begin position="355"/>
        <end position="359"/>
    </location>
</feature>
<feature type="chain" id="PRO_0000038778" description="Nucleocapsid protein p11" evidence="1">
    <location>
        <begin position="360"/>
        <end position="454"/>
    </location>
</feature>
<feature type="chain" id="PRO_0000038779" description="p9" evidence="1">
    <location>
        <begin position="436"/>
        <end position="486"/>
    </location>
</feature>
<feature type="zinc finger region" description="CCHC-type 1" evidence="3">
    <location>
        <begin position="381"/>
        <end position="398"/>
    </location>
</feature>
<feature type="zinc finger region" description="CCHC-type 2" evidence="3">
    <location>
        <begin position="400"/>
        <end position="417"/>
    </location>
</feature>
<feature type="region of interest" description="Disordered" evidence="4">
    <location>
        <begin position="414"/>
        <end position="460"/>
    </location>
</feature>
<feature type="short sequence motif" description="LYPX(n)L motif">
    <location>
        <begin position="457"/>
        <end position="461"/>
    </location>
</feature>
<feature type="compositionally biased region" description="Polar residues" evidence="4">
    <location>
        <begin position="430"/>
        <end position="457"/>
    </location>
</feature>
<feature type="disulfide bond" evidence="1">
    <location>
        <begin position="322"/>
        <end position="342"/>
    </location>
</feature>
<evidence type="ECO:0000250" key="1"/>
<evidence type="ECO:0000255" key="2"/>
<evidence type="ECO:0000255" key="3">
    <source>
        <dbReference type="PROSITE-ProRule" id="PRU00047"/>
    </source>
</evidence>
<evidence type="ECO:0000256" key="4">
    <source>
        <dbReference type="SAM" id="MobiDB-lite"/>
    </source>
</evidence>
<evidence type="ECO:0000305" key="5"/>
<organismHost>
    <name type="scientific">Equus asinus</name>
    <name type="common">Donkey</name>
    <name type="synonym">Equus africanus asinus</name>
    <dbReference type="NCBI Taxonomy" id="9793"/>
</organismHost>
<organismHost>
    <name type="scientific">Equus caballus</name>
    <name type="common">Horse</name>
    <dbReference type="NCBI Taxonomy" id="9796"/>
</organismHost>
<reference key="1">
    <citation type="journal article" date="1992" name="J. Virol.">
        <title>The surface envelope protein gene region of equine infectious anemia virus is not an important determinant of tropism in vitro.</title>
        <authorList>
            <person name="Perry S.T."/>
            <person name="Flaherty M.T."/>
            <person name="Kelley M.J."/>
            <person name="Clabough D.L."/>
            <person name="Tronick S.R."/>
            <person name="Coggins L."/>
            <person name="Whetter L."/>
            <person name="Lengel C.R."/>
            <person name="Fuller F."/>
        </authorList>
    </citation>
    <scope>NUCLEOTIDE SEQUENCE [GENOMIC RNA]</scope>
</reference>
<proteinExistence type="inferred from homology"/>
<dbReference type="EMBL" id="M87581">
    <property type="protein sequence ID" value="AAA43003.1"/>
    <property type="molecule type" value="Genomic_RNA"/>
</dbReference>
<dbReference type="PIR" id="A03949">
    <property type="entry name" value="FOLJEV"/>
</dbReference>
<dbReference type="RefSeq" id="NP_056901.1">
    <property type="nucleotide sequence ID" value="NC_001450.1"/>
</dbReference>
<dbReference type="BMRB" id="P69731"/>
<dbReference type="SMR" id="P69731"/>
<dbReference type="GeneID" id="1489984"/>
<dbReference type="KEGG" id="vg:1489984"/>
<dbReference type="GO" id="GO:0019013">
    <property type="term" value="C:viral nucleocapsid"/>
    <property type="evidence" value="ECO:0007669"/>
    <property type="project" value="UniProtKB-KW"/>
</dbReference>
<dbReference type="GO" id="GO:0003676">
    <property type="term" value="F:nucleic acid binding"/>
    <property type="evidence" value="ECO:0007669"/>
    <property type="project" value="InterPro"/>
</dbReference>
<dbReference type="GO" id="GO:0039660">
    <property type="term" value="F:structural constituent of virion"/>
    <property type="evidence" value="ECO:0007669"/>
    <property type="project" value="UniProtKB-KW"/>
</dbReference>
<dbReference type="GO" id="GO:0008270">
    <property type="term" value="F:zinc ion binding"/>
    <property type="evidence" value="ECO:0007669"/>
    <property type="project" value="UniProtKB-KW"/>
</dbReference>
<dbReference type="GO" id="GO:0039702">
    <property type="term" value="P:viral budding via host ESCRT complex"/>
    <property type="evidence" value="ECO:0007669"/>
    <property type="project" value="UniProtKB-KW"/>
</dbReference>
<dbReference type="Gene3D" id="1.10.1200.30">
    <property type="match status" value="1"/>
</dbReference>
<dbReference type="Gene3D" id="1.10.375.10">
    <property type="entry name" value="Human Immunodeficiency Virus Type 1 Capsid Protein"/>
    <property type="match status" value="1"/>
</dbReference>
<dbReference type="Gene3D" id="1.10.150.90">
    <property type="entry name" value="Immunodeficiency lentiviruses, gag gene matrix protein p17"/>
    <property type="match status" value="1"/>
</dbReference>
<dbReference type="Gene3D" id="4.10.60.10">
    <property type="entry name" value="Zinc finger, CCHC-type"/>
    <property type="match status" value="2"/>
</dbReference>
<dbReference type="InterPro" id="IPR014834">
    <property type="entry name" value="Gag_p15"/>
</dbReference>
<dbReference type="InterPro" id="IPR045345">
    <property type="entry name" value="Gag_p24_C"/>
</dbReference>
<dbReference type="InterPro" id="IPR012344">
    <property type="entry name" value="Matrix_HIV/RSV_N"/>
</dbReference>
<dbReference type="InterPro" id="IPR050195">
    <property type="entry name" value="Primate_lentivir_Gag_pol-like"/>
</dbReference>
<dbReference type="InterPro" id="IPR008916">
    <property type="entry name" value="Retrov_capsid_C"/>
</dbReference>
<dbReference type="InterPro" id="IPR008919">
    <property type="entry name" value="Retrov_capsid_N"/>
</dbReference>
<dbReference type="InterPro" id="IPR010999">
    <property type="entry name" value="Retrovr_matrix"/>
</dbReference>
<dbReference type="InterPro" id="IPR001878">
    <property type="entry name" value="Znf_CCHC"/>
</dbReference>
<dbReference type="InterPro" id="IPR036875">
    <property type="entry name" value="Znf_CCHC_sf"/>
</dbReference>
<dbReference type="PANTHER" id="PTHR40389">
    <property type="entry name" value="ENDOGENOUS RETROVIRUS GROUP K MEMBER 24 GAG POLYPROTEIN-RELATED"/>
    <property type="match status" value="1"/>
</dbReference>
<dbReference type="PANTHER" id="PTHR40389:SF2">
    <property type="entry name" value="ENDOGENOUS RETROVIRUS GROUP K MEMBER 24 GAG POLYPROTEIN-RELATED"/>
    <property type="match status" value="1"/>
</dbReference>
<dbReference type="Pfam" id="PF08723">
    <property type="entry name" value="Gag_p15"/>
    <property type="match status" value="1"/>
</dbReference>
<dbReference type="Pfam" id="PF19317">
    <property type="entry name" value="Gag_p24_C"/>
    <property type="match status" value="1"/>
</dbReference>
<dbReference type="Pfam" id="PF00098">
    <property type="entry name" value="zf-CCHC"/>
    <property type="match status" value="2"/>
</dbReference>
<dbReference type="SMART" id="SM00343">
    <property type="entry name" value="ZnF_C2HC"/>
    <property type="match status" value="2"/>
</dbReference>
<dbReference type="SUPFAM" id="SSF47836">
    <property type="entry name" value="Retroviral matrix proteins"/>
    <property type="match status" value="1"/>
</dbReference>
<dbReference type="SUPFAM" id="SSF47353">
    <property type="entry name" value="Retrovirus capsid dimerization domain-like"/>
    <property type="match status" value="1"/>
</dbReference>
<dbReference type="SUPFAM" id="SSF47943">
    <property type="entry name" value="Retrovirus capsid protein, N-terminal core domain"/>
    <property type="match status" value="1"/>
</dbReference>
<dbReference type="SUPFAM" id="SSF57756">
    <property type="entry name" value="Retrovirus zinc finger-like domains"/>
    <property type="match status" value="1"/>
</dbReference>
<dbReference type="PROSITE" id="PS50158">
    <property type="entry name" value="ZF_CCHC"/>
    <property type="match status" value="2"/>
</dbReference>
<comment type="function">
    <text evidence="1">Matrix protein p15 forms the outer shell of the core of the virus, lining the inner surface of the viral membrane.</text>
</comment>
<comment type="function">
    <text evidence="1">Capsid protein p26 forms the conical core of the virus that encapsulates the genomic RNA-nucleocapsid complex.</text>
</comment>
<comment type="function">
    <text evidence="1">Nucleocapsid protein p11 encapsulates and protects viral dimeric unspliced (genomic) RNA. Binds these RNAs through its zinc fingers (By similarity).</text>
</comment>
<comment type="function">
    <text evidence="1">p9 plays a role in budding of the assembled particle by interacting with PDCD6IP/AIP1.</text>
</comment>
<comment type="subunit">
    <molecule>p9</molecule>
    <text evidence="1">Interacts with human PDCD6IP/AIP1.</text>
</comment>
<comment type="subcellular location">
    <subcellularLocation>
        <location evidence="5">Virion</location>
    </subcellularLocation>
</comment>
<comment type="domain">
    <text evidence="1">Late-budding domains (L domains) are short sequence motifs essential for viral particle budding. They recruit proteins of the host ESCRT machinery (Endosomal Sorting Complex Required for Transport) or ESCRT-associated proteins. p9 contains one L domain: a LYPX(n)L motif, which interacts with PDCD6IP/AIP1 (By similarity).</text>
</comment>
<comment type="similarity">
    <text evidence="5">Belongs to the equine lentivirus group gag polyprotein family.</text>
</comment>
<name>GAG_EIAVC</name>
<gene>
    <name type="primary">gag</name>
</gene>